<reference key="1">
    <citation type="submission" date="2006-06" db="EMBL/GenBank/DDBJ databases">
        <title>Complete sequence of Pseudoalteromonas atlantica T6c.</title>
        <authorList>
            <consortium name="US DOE Joint Genome Institute"/>
            <person name="Copeland A."/>
            <person name="Lucas S."/>
            <person name="Lapidus A."/>
            <person name="Barry K."/>
            <person name="Detter J.C."/>
            <person name="Glavina del Rio T."/>
            <person name="Hammon N."/>
            <person name="Israni S."/>
            <person name="Dalin E."/>
            <person name="Tice H."/>
            <person name="Pitluck S."/>
            <person name="Saunders E."/>
            <person name="Brettin T."/>
            <person name="Bruce D."/>
            <person name="Han C."/>
            <person name="Tapia R."/>
            <person name="Gilna P."/>
            <person name="Schmutz J."/>
            <person name="Larimer F."/>
            <person name="Land M."/>
            <person name="Hauser L."/>
            <person name="Kyrpides N."/>
            <person name="Kim E."/>
            <person name="Karls A.C."/>
            <person name="Bartlett D."/>
            <person name="Higgins B.P."/>
            <person name="Richardson P."/>
        </authorList>
    </citation>
    <scope>NUCLEOTIDE SEQUENCE [LARGE SCALE GENOMIC DNA]</scope>
    <source>
        <strain>T6c / ATCC BAA-1087</strain>
    </source>
</reference>
<protein>
    <recommendedName>
        <fullName evidence="1">Argininosuccinate lyase</fullName>
        <shortName evidence="1">ASAL</shortName>
        <ecNumber evidence="1">4.3.2.1</ecNumber>
    </recommendedName>
    <alternativeName>
        <fullName evidence="1">Arginosuccinase</fullName>
    </alternativeName>
</protein>
<accession>Q15X84</accession>
<keyword id="KW-0028">Amino-acid biosynthesis</keyword>
<keyword id="KW-0055">Arginine biosynthesis</keyword>
<keyword id="KW-0963">Cytoplasm</keyword>
<keyword id="KW-0456">Lyase</keyword>
<feature type="chain" id="PRO_1000000523" description="Argininosuccinate lyase">
    <location>
        <begin position="1"/>
        <end position="458"/>
    </location>
</feature>
<proteinExistence type="inferred from homology"/>
<name>ARLY_PSEA6</name>
<comment type="catalytic activity">
    <reaction evidence="1">
        <text>2-(N(omega)-L-arginino)succinate = fumarate + L-arginine</text>
        <dbReference type="Rhea" id="RHEA:24020"/>
        <dbReference type="ChEBI" id="CHEBI:29806"/>
        <dbReference type="ChEBI" id="CHEBI:32682"/>
        <dbReference type="ChEBI" id="CHEBI:57472"/>
        <dbReference type="EC" id="4.3.2.1"/>
    </reaction>
</comment>
<comment type="pathway">
    <text evidence="1">Amino-acid biosynthesis; L-arginine biosynthesis; L-arginine from L-ornithine and carbamoyl phosphate: step 3/3.</text>
</comment>
<comment type="subcellular location">
    <subcellularLocation>
        <location evidence="1">Cytoplasm</location>
    </subcellularLocation>
</comment>
<comment type="similarity">
    <text evidence="1">Belongs to the lyase 1 family. Argininosuccinate lyase subfamily.</text>
</comment>
<sequence>MSLWGGRFQDGSSAMFRTVNDSLPFDRVLASQDIRGSIAWARAIAKAGVLNQDEHQQLEEALKALLVKADAGELDFDASSEEDIHSFVEATLIEQLGDVARKLHTGRSRNDQVATDFRLWTREHVDLLVEDVEAVIASLVGNADVNQDVILPGYTHLQRAQPVRYPHWCLAYVEMLKRDLSRLHDLKARLNQCPLGSGALAGTTYPIDRQAIAEELGFDSPCINSLDAVSDRDYVLELLFVASTSMMHLSRMAEDLIFYNSGEAGFIQLGDAVTSGSSLMPQKKNPDALELMRGKCGRVFGSLQALLVTMKGLPLAYNKDMQEDKEGLFDATNQWHICLRIACEVVDSIKLDSERCAKAAREGYANATELADYLVDKGIPFRTAHDISGRVVLDALEKKKAIEELTIAELKVYSDVIEEDVYPVLQLEYLVNKRDILGGTGIKPVLEALANAKASFKK</sequence>
<gene>
    <name evidence="1" type="primary">argH</name>
    <name type="ordered locus">Patl_0978</name>
</gene>
<organism>
    <name type="scientific">Pseudoalteromonas atlantica (strain T6c / ATCC BAA-1087)</name>
    <dbReference type="NCBI Taxonomy" id="3042615"/>
    <lineage>
        <taxon>Bacteria</taxon>
        <taxon>Pseudomonadati</taxon>
        <taxon>Pseudomonadota</taxon>
        <taxon>Gammaproteobacteria</taxon>
        <taxon>Alteromonadales</taxon>
        <taxon>Alteromonadaceae</taxon>
        <taxon>Paraglaciecola</taxon>
    </lineage>
</organism>
<dbReference type="EC" id="4.3.2.1" evidence="1"/>
<dbReference type="EMBL" id="CP000388">
    <property type="protein sequence ID" value="ABG39504.1"/>
    <property type="molecule type" value="Genomic_DNA"/>
</dbReference>
<dbReference type="RefSeq" id="WP_011573861.1">
    <property type="nucleotide sequence ID" value="NC_008228.1"/>
</dbReference>
<dbReference type="SMR" id="Q15X84"/>
<dbReference type="STRING" id="342610.Patl_0978"/>
<dbReference type="KEGG" id="pat:Patl_0978"/>
<dbReference type="eggNOG" id="COG0165">
    <property type="taxonomic scope" value="Bacteria"/>
</dbReference>
<dbReference type="HOGENOM" id="CLU_027272_2_3_6"/>
<dbReference type="OrthoDB" id="9769623at2"/>
<dbReference type="UniPathway" id="UPA00068">
    <property type="reaction ID" value="UER00114"/>
</dbReference>
<dbReference type="Proteomes" id="UP000001981">
    <property type="component" value="Chromosome"/>
</dbReference>
<dbReference type="GO" id="GO:0005829">
    <property type="term" value="C:cytosol"/>
    <property type="evidence" value="ECO:0007669"/>
    <property type="project" value="TreeGrafter"/>
</dbReference>
<dbReference type="GO" id="GO:0004056">
    <property type="term" value="F:argininosuccinate lyase activity"/>
    <property type="evidence" value="ECO:0007669"/>
    <property type="project" value="UniProtKB-UniRule"/>
</dbReference>
<dbReference type="GO" id="GO:0042450">
    <property type="term" value="P:arginine biosynthetic process via ornithine"/>
    <property type="evidence" value="ECO:0007669"/>
    <property type="project" value="InterPro"/>
</dbReference>
<dbReference type="GO" id="GO:0006526">
    <property type="term" value="P:L-arginine biosynthetic process"/>
    <property type="evidence" value="ECO:0007669"/>
    <property type="project" value="UniProtKB-UniRule"/>
</dbReference>
<dbReference type="CDD" id="cd01359">
    <property type="entry name" value="Argininosuccinate_lyase"/>
    <property type="match status" value="1"/>
</dbReference>
<dbReference type="FunFam" id="1.10.40.30:FF:000001">
    <property type="entry name" value="Argininosuccinate lyase"/>
    <property type="match status" value="1"/>
</dbReference>
<dbReference type="FunFam" id="1.20.200.10:FF:000006">
    <property type="entry name" value="Argininosuccinate lyase"/>
    <property type="match status" value="1"/>
</dbReference>
<dbReference type="Gene3D" id="1.10.40.30">
    <property type="entry name" value="Fumarase/aspartase (C-terminal domain)"/>
    <property type="match status" value="1"/>
</dbReference>
<dbReference type="Gene3D" id="1.20.200.10">
    <property type="entry name" value="Fumarase/aspartase (Central domain)"/>
    <property type="match status" value="1"/>
</dbReference>
<dbReference type="Gene3D" id="1.10.275.10">
    <property type="entry name" value="Fumarase/aspartase (N-terminal domain)"/>
    <property type="match status" value="1"/>
</dbReference>
<dbReference type="HAMAP" id="MF_00006">
    <property type="entry name" value="Arg_succ_lyase"/>
    <property type="match status" value="1"/>
</dbReference>
<dbReference type="InterPro" id="IPR029419">
    <property type="entry name" value="Arg_succ_lyase_C"/>
</dbReference>
<dbReference type="InterPro" id="IPR009049">
    <property type="entry name" value="Argininosuccinate_lyase"/>
</dbReference>
<dbReference type="InterPro" id="IPR024083">
    <property type="entry name" value="Fumarase/histidase_N"/>
</dbReference>
<dbReference type="InterPro" id="IPR020557">
    <property type="entry name" value="Fumarate_lyase_CS"/>
</dbReference>
<dbReference type="InterPro" id="IPR000362">
    <property type="entry name" value="Fumarate_lyase_fam"/>
</dbReference>
<dbReference type="InterPro" id="IPR022761">
    <property type="entry name" value="Fumarate_lyase_N"/>
</dbReference>
<dbReference type="InterPro" id="IPR008948">
    <property type="entry name" value="L-Aspartase-like"/>
</dbReference>
<dbReference type="NCBIfam" id="TIGR00838">
    <property type="entry name" value="argH"/>
    <property type="match status" value="1"/>
</dbReference>
<dbReference type="NCBIfam" id="NF008964">
    <property type="entry name" value="PRK12308.1"/>
    <property type="match status" value="1"/>
</dbReference>
<dbReference type="PANTHER" id="PTHR43814">
    <property type="entry name" value="ARGININOSUCCINATE LYASE"/>
    <property type="match status" value="1"/>
</dbReference>
<dbReference type="PANTHER" id="PTHR43814:SF1">
    <property type="entry name" value="ARGININOSUCCINATE LYASE"/>
    <property type="match status" value="1"/>
</dbReference>
<dbReference type="Pfam" id="PF14698">
    <property type="entry name" value="ASL_C2"/>
    <property type="match status" value="1"/>
</dbReference>
<dbReference type="Pfam" id="PF00206">
    <property type="entry name" value="Lyase_1"/>
    <property type="match status" value="1"/>
</dbReference>
<dbReference type="PRINTS" id="PR00145">
    <property type="entry name" value="ARGSUCLYASE"/>
</dbReference>
<dbReference type="PRINTS" id="PR00149">
    <property type="entry name" value="FUMRATELYASE"/>
</dbReference>
<dbReference type="SUPFAM" id="SSF48557">
    <property type="entry name" value="L-aspartase-like"/>
    <property type="match status" value="1"/>
</dbReference>
<dbReference type="PROSITE" id="PS00163">
    <property type="entry name" value="FUMARATE_LYASES"/>
    <property type="match status" value="1"/>
</dbReference>
<evidence type="ECO:0000255" key="1">
    <source>
        <dbReference type="HAMAP-Rule" id="MF_00006"/>
    </source>
</evidence>